<proteinExistence type="evidence at protein level"/>
<protein>
    <recommendedName>
        <fullName>AF4/FMR2 family member 4</fullName>
    </recommendedName>
</protein>
<feature type="chain" id="PRO_0000239394" description="AF4/FMR2 family member 4">
    <location>
        <begin position="1"/>
        <end position="1160"/>
    </location>
</feature>
<feature type="region of interest" description="Disordered" evidence="2">
    <location>
        <begin position="1"/>
        <end position="42"/>
    </location>
</feature>
<feature type="region of interest" description="Disordered" evidence="2">
    <location>
        <begin position="78"/>
        <end position="289"/>
    </location>
</feature>
<feature type="region of interest" description="Disordered" evidence="2">
    <location>
        <begin position="322"/>
        <end position="908"/>
    </location>
</feature>
<feature type="region of interest" description="Disordered" evidence="2">
    <location>
        <begin position="1031"/>
        <end position="1070"/>
    </location>
</feature>
<feature type="compositionally biased region" description="Basic and acidic residues" evidence="2">
    <location>
        <begin position="1"/>
        <end position="19"/>
    </location>
</feature>
<feature type="compositionally biased region" description="Polar residues" evidence="2">
    <location>
        <begin position="115"/>
        <end position="128"/>
    </location>
</feature>
<feature type="compositionally biased region" description="Low complexity" evidence="2">
    <location>
        <begin position="172"/>
        <end position="189"/>
    </location>
</feature>
<feature type="compositionally biased region" description="Basic and acidic residues" evidence="2">
    <location>
        <begin position="193"/>
        <end position="212"/>
    </location>
</feature>
<feature type="compositionally biased region" description="Low complexity" evidence="2">
    <location>
        <begin position="229"/>
        <end position="247"/>
    </location>
</feature>
<feature type="compositionally biased region" description="Polar residues" evidence="2">
    <location>
        <begin position="268"/>
        <end position="280"/>
    </location>
</feature>
<feature type="compositionally biased region" description="Polar residues" evidence="2">
    <location>
        <begin position="360"/>
        <end position="370"/>
    </location>
</feature>
<feature type="compositionally biased region" description="Polar residues" evidence="2">
    <location>
        <begin position="398"/>
        <end position="407"/>
    </location>
</feature>
<feature type="compositionally biased region" description="Basic and acidic residues" evidence="2">
    <location>
        <begin position="408"/>
        <end position="424"/>
    </location>
</feature>
<feature type="compositionally biased region" description="Low complexity" evidence="2">
    <location>
        <begin position="425"/>
        <end position="457"/>
    </location>
</feature>
<feature type="compositionally biased region" description="Polar residues" evidence="2">
    <location>
        <begin position="483"/>
        <end position="496"/>
    </location>
</feature>
<feature type="compositionally biased region" description="Polar residues" evidence="2">
    <location>
        <begin position="505"/>
        <end position="523"/>
    </location>
</feature>
<feature type="compositionally biased region" description="Polar residues" evidence="2">
    <location>
        <begin position="544"/>
        <end position="555"/>
    </location>
</feature>
<feature type="compositionally biased region" description="Basic and acidic residues" evidence="2">
    <location>
        <begin position="563"/>
        <end position="581"/>
    </location>
</feature>
<feature type="compositionally biased region" description="Basic residues" evidence="2">
    <location>
        <begin position="594"/>
        <end position="607"/>
    </location>
</feature>
<feature type="compositionally biased region" description="Basic and acidic residues" evidence="2">
    <location>
        <begin position="608"/>
        <end position="622"/>
    </location>
</feature>
<feature type="compositionally biased region" description="Low complexity" evidence="2">
    <location>
        <begin position="641"/>
        <end position="657"/>
    </location>
</feature>
<feature type="compositionally biased region" description="Basic and acidic residues" evidence="2">
    <location>
        <begin position="725"/>
        <end position="756"/>
    </location>
</feature>
<feature type="compositionally biased region" description="Basic and acidic residues" evidence="2">
    <location>
        <begin position="764"/>
        <end position="784"/>
    </location>
</feature>
<feature type="compositionally biased region" description="Basic and acidic residues" evidence="2">
    <location>
        <begin position="794"/>
        <end position="806"/>
    </location>
</feature>
<feature type="compositionally biased region" description="Low complexity" evidence="2">
    <location>
        <begin position="831"/>
        <end position="859"/>
    </location>
</feature>
<feature type="compositionally biased region" description="Low complexity" evidence="2">
    <location>
        <begin position="880"/>
        <end position="895"/>
    </location>
</feature>
<feature type="compositionally biased region" description="Low complexity" evidence="2">
    <location>
        <begin position="1059"/>
        <end position="1070"/>
    </location>
</feature>
<feature type="modified residue" description="Phosphoserine" evidence="1">
    <location>
        <position position="120"/>
    </location>
</feature>
<feature type="modified residue" description="Phosphoserine" evidence="1">
    <location>
        <position position="207"/>
    </location>
</feature>
<feature type="modified residue" description="Phosphoserine" evidence="1">
    <location>
        <position position="382"/>
    </location>
</feature>
<feature type="modified residue" description="Phosphoserine" evidence="1">
    <location>
        <position position="383"/>
    </location>
</feature>
<feature type="modified residue" description="Phosphoserine" evidence="1">
    <location>
        <position position="384"/>
    </location>
</feature>
<feature type="modified residue" description="Phosphoserine" evidence="1">
    <location>
        <position position="387"/>
    </location>
</feature>
<feature type="modified residue" description="Phosphoserine" evidence="7">
    <location>
        <position position="482"/>
    </location>
</feature>
<feature type="modified residue" description="Phosphoserine" evidence="7">
    <location>
        <position position="485"/>
    </location>
</feature>
<feature type="modified residue" description="Phosphoserine" evidence="7">
    <location>
        <position position="486"/>
    </location>
</feature>
<feature type="modified residue" description="Phosphoserine" evidence="1">
    <location>
        <position position="544"/>
    </location>
</feature>
<feature type="modified residue" description="Phosphoserine" evidence="1">
    <location>
        <position position="666"/>
    </location>
</feature>
<feature type="modified residue" description="Phosphothreonine" evidence="1">
    <location>
        <position position="669"/>
    </location>
</feature>
<feature type="modified residue" description="Phosphoserine" evidence="1">
    <location>
        <position position="675"/>
    </location>
</feature>
<feature type="modified residue" description="Phosphoserine" evidence="7">
    <location>
        <position position="689"/>
    </location>
</feature>
<feature type="modified residue" description="Phosphoserine" evidence="7">
    <location>
        <position position="698"/>
    </location>
</feature>
<feature type="modified residue" description="Phosphoserine" evidence="7">
    <location>
        <position position="701"/>
    </location>
</feature>
<feature type="modified residue" description="Phosphotyrosine" evidence="1">
    <location>
        <position position="707"/>
    </location>
</feature>
<feature type="modified residue" description="Phosphoserine" evidence="7">
    <location>
        <position position="809"/>
    </location>
</feature>
<feature type="modified residue" description="N6-acetyllysine" evidence="8">
    <location>
        <position position="817"/>
    </location>
</feature>
<feature type="modified residue" description="Phosphoserine" evidence="1">
    <location>
        <position position="831"/>
    </location>
</feature>
<feature type="modified residue" description="Phosphoserine" evidence="7">
    <location>
        <position position="1040"/>
    </location>
</feature>
<feature type="modified residue" description="Phosphoserine" evidence="1">
    <location>
        <position position="1052"/>
    </location>
</feature>
<feature type="modified residue" description="Phosphoserine" evidence="1">
    <location>
        <position position="1055"/>
    </location>
</feature>
<feature type="modified residue" description="Phosphoserine" evidence="1">
    <location>
        <position position="1059"/>
    </location>
</feature>
<feature type="cross-link" description="Glycyl lysine isopeptide (Lys-Gly) (interchain with G-Cter in SUMO2)" evidence="1">
    <location>
        <position position="578"/>
    </location>
</feature>
<feature type="sequence conflict" description="In Ref. 2; BAC28178." evidence="6" ref="2">
    <original>R</original>
    <variation>S</variation>
    <location>
        <position position="932"/>
    </location>
</feature>
<feature type="sequence conflict" description="In Ref. 2; BAC28178." evidence="6" ref="2">
    <original>L</original>
    <variation>Q</variation>
    <location>
        <position position="980"/>
    </location>
</feature>
<feature type="sequence conflict" description="In Ref. 2; BAC28178." evidence="6" ref="2">
    <original>Q</original>
    <variation>K</variation>
    <location>
        <position position="1088"/>
    </location>
</feature>
<reference key="1">
    <citation type="journal article" date="2000" name="Genomics">
        <title>Identification of 40 genes on a 1-Mb contig around the IL-4 cytokine family gene cluster on mouse chromosome 11.</title>
        <authorList>
            <person name="Wenderfer S.E."/>
            <person name="Slack J.P."/>
            <person name="McCluskey T.S."/>
            <person name="Monaco J.J."/>
        </authorList>
    </citation>
    <scope>NUCLEOTIDE SEQUENCE [MRNA]</scope>
    <source>
        <strain>NIH Black Swiss</strain>
    </source>
</reference>
<reference key="2">
    <citation type="journal article" date="2005" name="Science">
        <title>The transcriptional landscape of the mammalian genome.</title>
        <authorList>
            <person name="Carninci P."/>
            <person name="Kasukawa T."/>
            <person name="Katayama S."/>
            <person name="Gough J."/>
            <person name="Frith M.C."/>
            <person name="Maeda N."/>
            <person name="Oyama R."/>
            <person name="Ravasi T."/>
            <person name="Lenhard B."/>
            <person name="Wells C."/>
            <person name="Kodzius R."/>
            <person name="Shimokawa K."/>
            <person name="Bajic V.B."/>
            <person name="Brenner S.E."/>
            <person name="Batalov S."/>
            <person name="Forrest A.R."/>
            <person name="Zavolan M."/>
            <person name="Davis M.J."/>
            <person name="Wilming L.G."/>
            <person name="Aidinis V."/>
            <person name="Allen J.E."/>
            <person name="Ambesi-Impiombato A."/>
            <person name="Apweiler R."/>
            <person name="Aturaliya R.N."/>
            <person name="Bailey T.L."/>
            <person name="Bansal M."/>
            <person name="Baxter L."/>
            <person name="Beisel K.W."/>
            <person name="Bersano T."/>
            <person name="Bono H."/>
            <person name="Chalk A.M."/>
            <person name="Chiu K.P."/>
            <person name="Choudhary V."/>
            <person name="Christoffels A."/>
            <person name="Clutterbuck D.R."/>
            <person name="Crowe M.L."/>
            <person name="Dalla E."/>
            <person name="Dalrymple B.P."/>
            <person name="de Bono B."/>
            <person name="Della Gatta G."/>
            <person name="di Bernardo D."/>
            <person name="Down T."/>
            <person name="Engstrom P."/>
            <person name="Fagiolini M."/>
            <person name="Faulkner G."/>
            <person name="Fletcher C.F."/>
            <person name="Fukushima T."/>
            <person name="Furuno M."/>
            <person name="Futaki S."/>
            <person name="Gariboldi M."/>
            <person name="Georgii-Hemming P."/>
            <person name="Gingeras T.R."/>
            <person name="Gojobori T."/>
            <person name="Green R.E."/>
            <person name="Gustincich S."/>
            <person name="Harbers M."/>
            <person name="Hayashi Y."/>
            <person name="Hensch T.K."/>
            <person name="Hirokawa N."/>
            <person name="Hill D."/>
            <person name="Huminiecki L."/>
            <person name="Iacono M."/>
            <person name="Ikeo K."/>
            <person name="Iwama A."/>
            <person name="Ishikawa T."/>
            <person name="Jakt M."/>
            <person name="Kanapin A."/>
            <person name="Katoh M."/>
            <person name="Kawasawa Y."/>
            <person name="Kelso J."/>
            <person name="Kitamura H."/>
            <person name="Kitano H."/>
            <person name="Kollias G."/>
            <person name="Krishnan S.P."/>
            <person name="Kruger A."/>
            <person name="Kummerfeld S.K."/>
            <person name="Kurochkin I.V."/>
            <person name="Lareau L.F."/>
            <person name="Lazarevic D."/>
            <person name="Lipovich L."/>
            <person name="Liu J."/>
            <person name="Liuni S."/>
            <person name="McWilliam S."/>
            <person name="Madan Babu M."/>
            <person name="Madera M."/>
            <person name="Marchionni L."/>
            <person name="Matsuda H."/>
            <person name="Matsuzawa S."/>
            <person name="Miki H."/>
            <person name="Mignone F."/>
            <person name="Miyake S."/>
            <person name="Morris K."/>
            <person name="Mottagui-Tabar S."/>
            <person name="Mulder N."/>
            <person name="Nakano N."/>
            <person name="Nakauchi H."/>
            <person name="Ng P."/>
            <person name="Nilsson R."/>
            <person name="Nishiguchi S."/>
            <person name="Nishikawa S."/>
            <person name="Nori F."/>
            <person name="Ohara O."/>
            <person name="Okazaki Y."/>
            <person name="Orlando V."/>
            <person name="Pang K.C."/>
            <person name="Pavan W.J."/>
            <person name="Pavesi G."/>
            <person name="Pesole G."/>
            <person name="Petrovsky N."/>
            <person name="Piazza S."/>
            <person name="Reed J."/>
            <person name="Reid J.F."/>
            <person name="Ring B.Z."/>
            <person name="Ringwald M."/>
            <person name="Rost B."/>
            <person name="Ruan Y."/>
            <person name="Salzberg S.L."/>
            <person name="Sandelin A."/>
            <person name="Schneider C."/>
            <person name="Schoenbach C."/>
            <person name="Sekiguchi K."/>
            <person name="Semple C.A."/>
            <person name="Seno S."/>
            <person name="Sessa L."/>
            <person name="Sheng Y."/>
            <person name="Shibata Y."/>
            <person name="Shimada H."/>
            <person name="Shimada K."/>
            <person name="Silva D."/>
            <person name="Sinclair B."/>
            <person name="Sperling S."/>
            <person name="Stupka E."/>
            <person name="Sugiura K."/>
            <person name="Sultana R."/>
            <person name="Takenaka Y."/>
            <person name="Taki K."/>
            <person name="Tammoja K."/>
            <person name="Tan S.L."/>
            <person name="Tang S."/>
            <person name="Taylor M.S."/>
            <person name="Tegner J."/>
            <person name="Teichmann S.A."/>
            <person name="Ueda H.R."/>
            <person name="van Nimwegen E."/>
            <person name="Verardo R."/>
            <person name="Wei C.L."/>
            <person name="Yagi K."/>
            <person name="Yamanishi H."/>
            <person name="Zabarovsky E."/>
            <person name="Zhu S."/>
            <person name="Zimmer A."/>
            <person name="Hide W."/>
            <person name="Bult C."/>
            <person name="Grimmond S.M."/>
            <person name="Teasdale R.D."/>
            <person name="Liu E.T."/>
            <person name="Brusic V."/>
            <person name="Quackenbush J."/>
            <person name="Wahlestedt C."/>
            <person name="Mattick J.S."/>
            <person name="Hume D.A."/>
            <person name="Kai C."/>
            <person name="Sasaki D."/>
            <person name="Tomaru Y."/>
            <person name="Fukuda S."/>
            <person name="Kanamori-Katayama M."/>
            <person name="Suzuki M."/>
            <person name="Aoki J."/>
            <person name="Arakawa T."/>
            <person name="Iida J."/>
            <person name="Imamura K."/>
            <person name="Itoh M."/>
            <person name="Kato T."/>
            <person name="Kawaji H."/>
            <person name="Kawagashira N."/>
            <person name="Kawashima T."/>
            <person name="Kojima M."/>
            <person name="Kondo S."/>
            <person name="Konno H."/>
            <person name="Nakano K."/>
            <person name="Ninomiya N."/>
            <person name="Nishio T."/>
            <person name="Okada M."/>
            <person name="Plessy C."/>
            <person name="Shibata K."/>
            <person name="Shiraki T."/>
            <person name="Suzuki S."/>
            <person name="Tagami M."/>
            <person name="Waki K."/>
            <person name="Watahiki A."/>
            <person name="Okamura-Oho Y."/>
            <person name="Suzuki H."/>
            <person name="Kawai J."/>
            <person name="Hayashizaki Y."/>
        </authorList>
    </citation>
    <scope>NUCLEOTIDE SEQUENCE [LARGE SCALE MRNA]</scope>
    <source>
        <strain>C57BL/6J</strain>
        <tissue>Head</tissue>
        <tissue>Ovary</tissue>
        <tissue>Testis</tissue>
    </source>
</reference>
<reference key="3">
    <citation type="journal article" date="2004" name="Genome Res.">
        <title>The status, quality, and expansion of the NIH full-length cDNA project: the Mammalian Gene Collection (MGC).</title>
        <authorList>
            <consortium name="The MGC Project Team"/>
        </authorList>
    </citation>
    <scope>NUCLEOTIDE SEQUENCE [LARGE SCALE MRNA]</scope>
    <source>
        <tissue>Brain</tissue>
    </source>
</reference>
<reference key="4">
    <citation type="journal article" date="2005" name="Mol. Cell. Biol.">
        <title>Infertility with defective spermiogenesis in mice lacking AF5q31, the target of chromosomal translocation in human infant leukemia.</title>
        <authorList>
            <person name="Urano A."/>
            <person name="Endoh M."/>
            <person name="Wada T."/>
            <person name="Morikawa Y."/>
            <person name="Itoh M."/>
            <person name="Kataoka Y."/>
            <person name="Taki T."/>
            <person name="Akazawa H."/>
            <person name="Nakajima H."/>
            <person name="Komuro I."/>
            <person name="Yoshida N."/>
            <person name="Hayashi Y."/>
            <person name="Handa H."/>
            <person name="Kitamura T."/>
            <person name="Nosaka T."/>
        </authorList>
    </citation>
    <scope>TISSUE SPECIFICITY</scope>
    <scope>DEVELOPMENTAL STAGE</scope>
    <scope>DISRUPTION PHENOTYPE</scope>
</reference>
<reference key="5">
    <citation type="journal article" date="2010" name="Cell">
        <title>A tissue-specific atlas of mouse protein phosphorylation and expression.</title>
        <authorList>
            <person name="Huttlin E.L."/>
            <person name="Jedrychowski M.P."/>
            <person name="Elias J.E."/>
            <person name="Goswami T."/>
            <person name="Rad R."/>
            <person name="Beausoleil S.A."/>
            <person name="Villen J."/>
            <person name="Haas W."/>
            <person name="Sowa M.E."/>
            <person name="Gygi S.P."/>
        </authorList>
    </citation>
    <scope>PHOSPHORYLATION [LARGE SCALE ANALYSIS] AT SER-482; SER-485; SER-486; SER-689; SER-698; SER-701; SER-809 AND SER-1040</scope>
    <scope>IDENTIFICATION BY MASS SPECTROMETRY [LARGE SCALE ANALYSIS]</scope>
    <source>
        <tissue>Kidney</tissue>
        <tissue>Pancreas</tissue>
        <tissue>Testis</tissue>
    </source>
</reference>
<reference key="6">
    <citation type="journal article" date="2011" name="Mol. Cell">
        <title>The little elongation complex regulates small nuclear RNA transcription.</title>
        <authorList>
            <person name="Smith E.R."/>
            <person name="Lin C."/>
            <person name="Garrett A.S."/>
            <person name="Thornton J."/>
            <person name="Mohaghegh N."/>
            <person name="Hu D."/>
            <person name="Jackson J."/>
            <person name="Saraf A."/>
            <person name="Swanson S.K."/>
            <person name="Seidel C."/>
            <person name="Florens L."/>
            <person name="Washburn M.P."/>
            <person name="Eissenberg J.C."/>
            <person name="Shilatifard A."/>
        </authorList>
    </citation>
    <scope>SUBCELLULAR LOCATION</scope>
</reference>
<reference key="7">
    <citation type="journal article" date="2013" name="Cell">
        <title>The RNA Pol II elongation factor Ell3 marks enhancers in ES cells and primes future gene activation.</title>
        <authorList>
            <person name="Lin C."/>
            <person name="Garruss A.S."/>
            <person name="Luo Z."/>
            <person name="Guo F."/>
            <person name="Shilatifard A."/>
        </authorList>
    </citation>
    <scope>INTERACTION WITH ELL3</scope>
</reference>
<reference key="8">
    <citation type="journal article" date="2013" name="Mol. Cell">
        <title>SIRT5-mediated lysine desuccinylation impacts diverse metabolic pathways.</title>
        <authorList>
            <person name="Park J."/>
            <person name="Chen Y."/>
            <person name="Tishkoff D.X."/>
            <person name="Peng C."/>
            <person name="Tan M."/>
            <person name="Dai L."/>
            <person name="Xie Z."/>
            <person name="Zhang Y."/>
            <person name="Zwaans B.M."/>
            <person name="Skinner M.E."/>
            <person name="Lombard D.B."/>
            <person name="Zhao Y."/>
        </authorList>
    </citation>
    <scope>ACETYLATION [LARGE SCALE ANALYSIS] AT LYS-817</scope>
    <scope>IDENTIFICATION BY MASS SPECTROMETRY [LARGE SCALE ANALYSIS]</scope>
    <source>
        <tissue>Embryonic fibroblast</tissue>
    </source>
</reference>
<evidence type="ECO:0000250" key="1">
    <source>
        <dbReference type="UniProtKB" id="Q9UHB7"/>
    </source>
</evidence>
<evidence type="ECO:0000256" key="2">
    <source>
        <dbReference type="SAM" id="MobiDB-lite"/>
    </source>
</evidence>
<evidence type="ECO:0000269" key="3">
    <source>
    </source>
</evidence>
<evidence type="ECO:0000269" key="4">
    <source>
    </source>
</evidence>
<evidence type="ECO:0000269" key="5">
    <source>
    </source>
</evidence>
<evidence type="ECO:0000305" key="6"/>
<evidence type="ECO:0007744" key="7">
    <source>
    </source>
</evidence>
<evidence type="ECO:0007744" key="8">
    <source>
    </source>
</evidence>
<keyword id="KW-0007">Acetylation</keyword>
<keyword id="KW-0158">Chromosome</keyword>
<keyword id="KW-1017">Isopeptide bond</keyword>
<keyword id="KW-0539">Nucleus</keyword>
<keyword id="KW-0597">Phosphoprotein</keyword>
<keyword id="KW-0656">Proto-oncogene</keyword>
<keyword id="KW-1185">Reference proteome</keyword>
<keyword id="KW-0804">Transcription</keyword>
<keyword id="KW-0805">Transcription regulation</keyword>
<keyword id="KW-0832">Ubl conjugation</keyword>
<name>AFF4_MOUSE</name>
<sequence length="1160" mass="126639">MNREDRNVLRMKERERRNQEIQQGEDAFPPSSPLFAEPYKVTSKEDKLSSRIQSMLGNYDEMKDYIGDRSIPKLVAIPKPAVPTTTDEKANPNFFEQRHGGSHQSSKWTPVGPAPSTSQSQKRSSALQSGHSSQRSGAGGSGASSSGQRHDRDSYSSSRKKGQHGSEHSKSRSSSPGKPQAVSSLSSSHSRSHGNDHHSKEHQRSKSPRDPDANWDSPSRGPFSSGQHSSQSFPPSLMSKSSSMLQKPTAYVRPMDGQESVEPKLSSEHYSSQSHGNSMTELKPSSKAHLTKLKIPSRPLDASVSGDVSCVDEILKEMTHSWPPPLTAIHTPCKTEPSKFPFPTKESQQSNFGPGEQKRYSTAKTSNGHQSKSMLKDDLKLSSSEDSDGEQDCDKTMPRSTPGSNSEPSHHNSEGADNSRDDSSSHSGSESSSGSDSESESSSSDSEANEPSQSASPEPEPPPTNKWQLDNWLNKVNPHKVSPASSVDSNIPSSQAYKKEGREQGTASNYTDPGGTKETSSATPGRDSKTIQKGSESGRGRQKSPAQSDSTTQRRTVGKKQPKKPEKSAAEEPRGGLKIESETPVDMAASMPSSRHKAATKGSRKPNIKKESKSSPRPTAEKKKYKSASKPSQKSREIIETDTSSSDSDGSESLPPSSQTPKYPESNRTPVKPSSVEEEDSFFRQRMFSPMEEKELLSPLSEPDDRYPLIVKIDLNLLTRIPGKPYKETEPPKGEKKNVPEKHSREVQKQASEKASNKGKRKHKNDDDTRASESKKPKTEDKNSSGHKPSSSRESSKQSSTKEKDLLPSPAGPILSKDSKTEHGSRKRTVSQSSSLKSSGTSSKENSGSSSKSSSSSTAKQKKTEGKGPSSSKEAKEKAPNSSSNCPPSTPTSESSKPRRTKLAFDDRNYSADHYLQEAKKLKHNADALSDRFEKAVYYLDAVVSFIECGNALEKNAQESKSPFPMYSDTVELIKYTMKLKNYLAPDATAADKRLTVLCLRCQSLLYLRLFKLKKENALKYSKTLTEHLKNSYSNSQAPSPGLGSKAVGMPSPVSPKLSPGNSGSYSSGGSSASASGSSVTIPQKIHQMAASYVQVTSNFLYATEIWDQAEQLSKEQKEFFAELDKVMGPLIFNASIMTDLARYTRQGLHWLRQDAKLIS</sequence>
<gene>
    <name type="primary">Aff4</name>
    <name type="synonym">Alf4</name>
</gene>
<organism>
    <name type="scientific">Mus musculus</name>
    <name type="common">Mouse</name>
    <dbReference type="NCBI Taxonomy" id="10090"/>
    <lineage>
        <taxon>Eukaryota</taxon>
        <taxon>Metazoa</taxon>
        <taxon>Chordata</taxon>
        <taxon>Craniata</taxon>
        <taxon>Vertebrata</taxon>
        <taxon>Euteleostomi</taxon>
        <taxon>Mammalia</taxon>
        <taxon>Eutheria</taxon>
        <taxon>Euarchontoglires</taxon>
        <taxon>Glires</taxon>
        <taxon>Rodentia</taxon>
        <taxon>Myomorpha</taxon>
        <taxon>Muroidea</taxon>
        <taxon>Muridae</taxon>
        <taxon>Murinae</taxon>
        <taxon>Mus</taxon>
        <taxon>Mus</taxon>
    </lineage>
</organism>
<accession>Q9ESC8</accession>
<accession>B2RST9</accession>
<accession>Q8C6K4</accession>
<accession>Q8C6W3</accession>
<accession>Q8CCH3</accession>
<dbReference type="EMBL" id="AF190449">
    <property type="protein sequence ID" value="AAG17126.1"/>
    <property type="molecule type" value="mRNA"/>
</dbReference>
<dbReference type="EMBL" id="AK033163">
    <property type="protein sequence ID" value="BAC28178.1"/>
    <property type="status" value="ALT_FRAME"/>
    <property type="molecule type" value="mRNA"/>
</dbReference>
<dbReference type="EMBL" id="AK053034">
    <property type="protein sequence ID" value="BAC35244.1"/>
    <property type="molecule type" value="mRNA"/>
</dbReference>
<dbReference type="EMBL" id="AK054401">
    <property type="protein sequence ID" value="BAC35763.1"/>
    <property type="status" value="ALT_FRAME"/>
    <property type="molecule type" value="mRNA"/>
</dbReference>
<dbReference type="EMBL" id="BC138999">
    <property type="protein sequence ID" value="AAI39000.1"/>
    <property type="molecule type" value="mRNA"/>
</dbReference>
<dbReference type="CCDS" id="CCDS24676.1"/>
<dbReference type="RefSeq" id="NP_291043.1">
    <property type="nucleotide sequence ID" value="NM_033565.2"/>
</dbReference>
<dbReference type="RefSeq" id="XP_011247633.1">
    <property type="nucleotide sequence ID" value="XM_011249331.3"/>
</dbReference>
<dbReference type="SMR" id="Q9ESC8"/>
<dbReference type="BioGRID" id="220280">
    <property type="interactions" value="2"/>
</dbReference>
<dbReference type="FunCoup" id="Q9ESC8">
    <property type="interactions" value="4232"/>
</dbReference>
<dbReference type="IntAct" id="Q9ESC8">
    <property type="interactions" value="2"/>
</dbReference>
<dbReference type="STRING" id="10090.ENSMUSP00000051479"/>
<dbReference type="GlyGen" id="Q9ESC8">
    <property type="glycosylation" value="3 sites, 1 N-linked glycan (1 site), 1 O-linked glycan (1 site)"/>
</dbReference>
<dbReference type="iPTMnet" id="Q9ESC8"/>
<dbReference type="PhosphoSitePlus" id="Q9ESC8"/>
<dbReference type="jPOST" id="Q9ESC8"/>
<dbReference type="PaxDb" id="10090-ENSMUSP00000051479"/>
<dbReference type="ProteomicsDB" id="285769"/>
<dbReference type="Pumba" id="Q9ESC8"/>
<dbReference type="Antibodypedia" id="14555">
    <property type="antibodies" value="257 antibodies from 31 providers"/>
</dbReference>
<dbReference type="DNASU" id="93736"/>
<dbReference type="Ensembl" id="ENSMUST00000060945.12">
    <property type="protein sequence ID" value="ENSMUSP00000051479.6"/>
    <property type="gene ID" value="ENSMUSG00000049470.14"/>
</dbReference>
<dbReference type="GeneID" id="93736"/>
<dbReference type="KEGG" id="mmu:93736"/>
<dbReference type="UCSC" id="uc007ivu.2">
    <property type="organism name" value="mouse"/>
</dbReference>
<dbReference type="AGR" id="MGI:2136171"/>
<dbReference type="CTD" id="27125"/>
<dbReference type="MGI" id="MGI:2136171">
    <property type="gene designation" value="Aff4"/>
</dbReference>
<dbReference type="VEuPathDB" id="HostDB:ENSMUSG00000049470"/>
<dbReference type="eggNOG" id="ENOG502QR32">
    <property type="taxonomic scope" value="Eukaryota"/>
</dbReference>
<dbReference type="GeneTree" id="ENSGT00950000182974"/>
<dbReference type="HOGENOM" id="CLU_006484_0_0_1"/>
<dbReference type="InParanoid" id="Q9ESC8"/>
<dbReference type="OMA" id="HTREPQK"/>
<dbReference type="OrthoDB" id="6382204at2759"/>
<dbReference type="PhylomeDB" id="Q9ESC8"/>
<dbReference type="TreeFam" id="TF326216"/>
<dbReference type="Reactome" id="R-MMU-112382">
    <property type="pathway name" value="Formation of RNA Pol II elongation complex"/>
</dbReference>
<dbReference type="Reactome" id="R-MMU-674695">
    <property type="pathway name" value="RNA Polymerase II Pre-transcription Events"/>
</dbReference>
<dbReference type="Reactome" id="R-MMU-75955">
    <property type="pathway name" value="RNA Polymerase II Transcription Elongation"/>
</dbReference>
<dbReference type="BioGRID-ORCS" id="93736">
    <property type="hits" value="3 hits in 79 CRISPR screens"/>
</dbReference>
<dbReference type="ChiTaRS" id="Aff4">
    <property type="organism name" value="mouse"/>
</dbReference>
<dbReference type="PRO" id="PR:Q9ESC8"/>
<dbReference type="Proteomes" id="UP000000589">
    <property type="component" value="Chromosome 11"/>
</dbReference>
<dbReference type="RNAct" id="Q9ESC8">
    <property type="molecule type" value="protein"/>
</dbReference>
<dbReference type="Bgee" id="ENSMUSG00000049470">
    <property type="expression patterns" value="Expressed in undifferentiated genital tubercle and 259 other cell types or tissues"/>
</dbReference>
<dbReference type="ExpressionAtlas" id="Q9ESC8">
    <property type="expression patterns" value="baseline and differential"/>
</dbReference>
<dbReference type="GO" id="GO:0000791">
    <property type="term" value="C:euchromatin"/>
    <property type="evidence" value="ECO:0000314"/>
    <property type="project" value="UniProtKB"/>
</dbReference>
<dbReference type="GO" id="GO:0001650">
    <property type="term" value="C:fibrillar center"/>
    <property type="evidence" value="ECO:0007669"/>
    <property type="project" value="Ensembl"/>
</dbReference>
<dbReference type="GO" id="GO:0016604">
    <property type="term" value="C:nuclear body"/>
    <property type="evidence" value="ECO:0007669"/>
    <property type="project" value="Ensembl"/>
</dbReference>
<dbReference type="GO" id="GO:0005634">
    <property type="term" value="C:nucleus"/>
    <property type="evidence" value="ECO:0000314"/>
    <property type="project" value="MGI"/>
</dbReference>
<dbReference type="GO" id="GO:0008023">
    <property type="term" value="C:transcription elongation factor complex"/>
    <property type="evidence" value="ECO:0000250"/>
    <property type="project" value="UniProtKB"/>
</dbReference>
<dbReference type="GO" id="GO:0010468">
    <property type="term" value="P:regulation of gene expression"/>
    <property type="evidence" value="ECO:0007669"/>
    <property type="project" value="InterPro"/>
</dbReference>
<dbReference type="GO" id="GO:0034976">
    <property type="term" value="P:response to endoplasmic reticulum stress"/>
    <property type="evidence" value="ECO:0007669"/>
    <property type="project" value="Ensembl"/>
</dbReference>
<dbReference type="GO" id="GO:0007286">
    <property type="term" value="P:spermatid development"/>
    <property type="evidence" value="ECO:0000315"/>
    <property type="project" value="MGI"/>
</dbReference>
<dbReference type="Gene3D" id="6.10.250.2670">
    <property type="match status" value="1"/>
</dbReference>
<dbReference type="InterPro" id="IPR007797">
    <property type="entry name" value="AF4/FMR2"/>
</dbReference>
<dbReference type="InterPro" id="IPR043640">
    <property type="entry name" value="AF4/FMR2_CHD"/>
</dbReference>
<dbReference type="InterPro" id="IPR043639">
    <property type="entry name" value="AF4_int"/>
</dbReference>
<dbReference type="PANTHER" id="PTHR10528">
    <property type="entry name" value="AF4/FMR2 FAMILY MEMBER"/>
    <property type="match status" value="1"/>
</dbReference>
<dbReference type="PANTHER" id="PTHR10528:SF15">
    <property type="entry name" value="AF4_FMR2 FAMILY MEMBER 4"/>
    <property type="match status" value="1"/>
</dbReference>
<dbReference type="Pfam" id="PF05110">
    <property type="entry name" value="AF-4"/>
    <property type="match status" value="1"/>
</dbReference>
<dbReference type="Pfam" id="PF18875">
    <property type="entry name" value="AF4_int"/>
    <property type="match status" value="1"/>
</dbReference>
<dbReference type="Pfam" id="PF18876">
    <property type="entry name" value="AFF4_CHD"/>
    <property type="match status" value="1"/>
</dbReference>
<comment type="function">
    <text evidence="1">Key component of the super elongation complex (SEC), a complex required to increase the catalytic rate of RNA polymerase II transcription by suppressing transient pausing by the polymerase at multiple sites along the DNA. In the SEC complex, AFF4 acts as a central scaffold that recruits other factors through direct interactions with ELL proteins (ELL, ELL2 or ELL3) and the P-TEFb complex.</text>
</comment>
<comment type="subunit">
    <text evidence="1 5">Component of the super elongation complex (SEC), at least composed of EAF1, EAF2, CDK9, MLLT3/AF9, AFF (AFF1 or AFF4), the P-TEFb complex and ELL (ELL, ELL2 or ELL3) (By similarity). Interacts with ELL2; the interaction is direct and leads to stabilize ELL2 and prevent ELL2 ubiquitination and degradation (By similarity). Interacts with ELL3; the interaction is direct (PubMed:23273992).</text>
</comment>
<comment type="subcellular location">
    <subcellularLocation>
        <location evidence="4">Nucleus</location>
    </subcellularLocation>
    <subcellularLocation>
        <location evidence="4">Chromosome</location>
    </subcellularLocation>
    <text evidence="4">Associates to transcriptionally active chromatin but not at snRNA genes.</text>
</comment>
<comment type="tissue specificity">
    <text evidence="3">Highly expressed in testis by Sertoli cells, and at low levels in other tissues.</text>
</comment>
<comment type="developmental stage">
    <text evidence="3">Expressed throughout embryogenesis with maximum expression at 10.5 and 12.5 dpc.</text>
</comment>
<comment type="PTM">
    <text evidence="1">Dephosphorylated at Ser-544 by the PNUTS-PP1 complex, promoting RNA polymerase II transcription pause-release.</text>
</comment>
<comment type="disruption phenotype">
    <text evidence="3">Mice are infertile with azoospermia. Spermatogenesis is arrested at the level of spermiogenesis.</text>
</comment>
<comment type="similarity">
    <text evidence="6">Belongs to the AF4 family.</text>
</comment>
<comment type="sequence caution" evidence="6">
    <conflict type="frameshift">
        <sequence resource="EMBL-CDS" id="BAC28178"/>
    </conflict>
</comment>
<comment type="sequence caution" evidence="6">
    <conflict type="frameshift">
        <sequence resource="EMBL-CDS" id="BAC35763"/>
    </conflict>
</comment>